<accession>Q6CNC2</accession>
<feature type="chain" id="PRO_0000407814" description="Nucleolar protein 9">
    <location>
        <begin position="1"/>
        <end position="668"/>
    </location>
</feature>
<feature type="repeat" description="Pumilio 1">
    <location>
        <begin position="90"/>
        <end position="125"/>
    </location>
</feature>
<feature type="repeat" description="Pumilio 2">
    <location>
        <begin position="126"/>
        <end position="161"/>
    </location>
</feature>
<feature type="repeat" description="Pumilio 3">
    <location>
        <begin position="185"/>
        <end position="220"/>
    </location>
</feature>
<feature type="repeat" description="Pumilio 4">
    <location>
        <begin position="285"/>
        <end position="327"/>
    </location>
</feature>
<feature type="repeat" description="Pumilio 5">
    <location>
        <begin position="335"/>
        <end position="370"/>
    </location>
</feature>
<feature type="repeat" description="Pumilio 6">
    <location>
        <begin position="372"/>
        <end position="408"/>
    </location>
</feature>
<feature type="repeat" description="Pumilio 7">
    <location>
        <begin position="513"/>
        <end position="550"/>
    </location>
</feature>
<feature type="repeat" description="Pumilio 8">
    <location>
        <begin position="551"/>
        <end position="588"/>
    </location>
</feature>
<feature type="region of interest" description="Disordered" evidence="2">
    <location>
        <begin position="1"/>
        <end position="42"/>
    </location>
</feature>
<feature type="region of interest" description="Disordered" evidence="2">
    <location>
        <begin position="637"/>
        <end position="668"/>
    </location>
</feature>
<feature type="compositionally biased region" description="Basic residues" evidence="2">
    <location>
        <begin position="1"/>
        <end position="13"/>
    </location>
</feature>
<feature type="compositionally biased region" description="Basic and acidic residues" evidence="2">
    <location>
        <begin position="14"/>
        <end position="30"/>
    </location>
</feature>
<organism>
    <name type="scientific">Kluyveromyces lactis (strain ATCC 8585 / CBS 2359 / DSM 70799 / NBRC 1267 / NRRL Y-1140 / WM37)</name>
    <name type="common">Yeast</name>
    <name type="synonym">Candida sphaerica</name>
    <dbReference type="NCBI Taxonomy" id="284590"/>
    <lineage>
        <taxon>Eukaryota</taxon>
        <taxon>Fungi</taxon>
        <taxon>Dikarya</taxon>
        <taxon>Ascomycota</taxon>
        <taxon>Saccharomycotina</taxon>
        <taxon>Saccharomycetes</taxon>
        <taxon>Saccharomycetales</taxon>
        <taxon>Saccharomycetaceae</taxon>
        <taxon>Kluyveromyces</taxon>
    </lineage>
</organism>
<sequence length="668" mass="77126">MARVRGRKLIKKLKKDEFHPEDNKTHDEPTVSHVNETAGGDNSDVSPNTFFGVLDSGELDYFKKAESTLAIDTFENPDEKYQFINSVIEESKGKELKLATSQISSKLMERIIMESDETQLKTIFKAFNGFYFNLACHKYSSHVLETLLVRGAAQVEKELLTPDFDSVDEGEFVTTESLFLFLTNELQPNLRFMVSHQYASHVLRILILVLSSKTLPSTVQNNSTLRSKKSKIARKMIDIKDNDNYNKIFKTPDSFKVVLRSMLSSIYTSFTHGIPQGSGHFSEISLADVMKFREICVDKIGSPVIQLVIQVEGIFDRDRSYWHLIFKDSDEKDPKEESFVEYLLSDAVGSHFLQNVIASTRIKYVERLYRLYMKDRIPKLAKRDTTAAFVLQSLLKVLNSKEVKEIMDELVPDLSVLLNSNMDFGTEIIDASIRHDNYLRDEIIEQLMKKYYPRESSDKNILESCLQLSSSTLGNTRDDWPTAEERRKSLFLEKLIDYDDCFLNSTIDSMLNLPAERLLQMPYHGVFSHVVEHVLQVKRVAIIKRKLLLNVLCKDIVNLSCNAYGSHIVDKLWTFTAKLAMYKERIATALCADSEKVKNSVYGRQVWKNWSLELFVRKRYDWKKIVKEQELEMFPDSKPLQPKTFKRPNNNNNSDVSPSFKKSKFQKK</sequence>
<evidence type="ECO:0000250" key="1"/>
<evidence type="ECO:0000256" key="2">
    <source>
        <dbReference type="SAM" id="MobiDB-lite"/>
    </source>
</evidence>
<evidence type="ECO:0000305" key="3"/>
<keyword id="KW-0539">Nucleus</keyword>
<keyword id="KW-1185">Reference proteome</keyword>
<keyword id="KW-0677">Repeat</keyword>
<keyword id="KW-0690">Ribosome biogenesis</keyword>
<keyword id="KW-0698">rRNA processing</keyword>
<dbReference type="EMBL" id="CR382125">
    <property type="protein sequence ID" value="CAG99654.1"/>
    <property type="molecule type" value="Genomic_DNA"/>
</dbReference>
<dbReference type="RefSeq" id="XP_454567.1">
    <property type="nucleotide sequence ID" value="XM_454567.1"/>
</dbReference>
<dbReference type="SMR" id="Q6CNC2"/>
<dbReference type="FunCoup" id="Q6CNC2">
    <property type="interactions" value="983"/>
</dbReference>
<dbReference type="STRING" id="284590.Q6CNC2"/>
<dbReference type="PaxDb" id="284590-Q6CNC2"/>
<dbReference type="KEGG" id="kla:KLLA0_E13685g"/>
<dbReference type="eggNOG" id="KOG2188">
    <property type="taxonomic scope" value="Eukaryota"/>
</dbReference>
<dbReference type="HOGENOM" id="CLU_008720_1_1_1"/>
<dbReference type="InParanoid" id="Q6CNC2"/>
<dbReference type="OMA" id="HHLVRNF"/>
<dbReference type="Proteomes" id="UP000000598">
    <property type="component" value="Chromosome E"/>
</dbReference>
<dbReference type="GO" id="GO:0030686">
    <property type="term" value="C:90S preribosome"/>
    <property type="evidence" value="ECO:0007669"/>
    <property type="project" value="TreeGrafter"/>
</dbReference>
<dbReference type="GO" id="GO:0005730">
    <property type="term" value="C:nucleolus"/>
    <property type="evidence" value="ECO:0007669"/>
    <property type="project" value="UniProtKB-SubCell"/>
</dbReference>
<dbReference type="GO" id="GO:0030688">
    <property type="term" value="C:preribosome, small subunit precursor"/>
    <property type="evidence" value="ECO:0007669"/>
    <property type="project" value="TreeGrafter"/>
</dbReference>
<dbReference type="GO" id="GO:0003723">
    <property type="term" value="F:RNA binding"/>
    <property type="evidence" value="ECO:0007669"/>
    <property type="project" value="InterPro"/>
</dbReference>
<dbReference type="GO" id="GO:0000480">
    <property type="term" value="P:endonucleolytic cleavage in 5'-ETS of tricistronic rRNA transcript (SSU-rRNA, 5.8S rRNA, LSU-rRNA)"/>
    <property type="evidence" value="ECO:0007669"/>
    <property type="project" value="TreeGrafter"/>
</dbReference>
<dbReference type="GO" id="GO:0000447">
    <property type="term" value="P:endonucleolytic cleavage in ITS1 to separate SSU-rRNA from 5.8S rRNA and LSU-rRNA from tricistronic rRNA transcript (SSU-rRNA, 5.8S rRNA, LSU-rRNA)"/>
    <property type="evidence" value="ECO:0007669"/>
    <property type="project" value="TreeGrafter"/>
</dbReference>
<dbReference type="GO" id="GO:0000472">
    <property type="term" value="P:endonucleolytic cleavage to generate mature 5'-end of SSU-rRNA from (SSU-rRNA, 5.8S rRNA, LSU-rRNA)"/>
    <property type="evidence" value="ECO:0007669"/>
    <property type="project" value="TreeGrafter"/>
</dbReference>
<dbReference type="GO" id="GO:0000056">
    <property type="term" value="P:ribosomal small subunit export from nucleus"/>
    <property type="evidence" value="ECO:0007669"/>
    <property type="project" value="TreeGrafter"/>
</dbReference>
<dbReference type="Gene3D" id="1.25.10.10">
    <property type="entry name" value="Leucine-rich Repeat Variant"/>
    <property type="match status" value="3"/>
</dbReference>
<dbReference type="InterPro" id="IPR011989">
    <property type="entry name" value="ARM-like"/>
</dbReference>
<dbReference type="InterPro" id="IPR016024">
    <property type="entry name" value="ARM-type_fold"/>
</dbReference>
<dbReference type="InterPro" id="IPR040000">
    <property type="entry name" value="NOP9"/>
</dbReference>
<dbReference type="InterPro" id="IPR001313">
    <property type="entry name" value="Pumilio_RNA-bd_rpt"/>
</dbReference>
<dbReference type="PANTHER" id="PTHR13102">
    <property type="entry name" value="NUCLEOLAR PROTEIN 9"/>
    <property type="match status" value="1"/>
</dbReference>
<dbReference type="PANTHER" id="PTHR13102:SF0">
    <property type="entry name" value="NUCLEOLAR PROTEIN 9"/>
    <property type="match status" value="1"/>
</dbReference>
<dbReference type="Pfam" id="PF22493">
    <property type="entry name" value="PUF_NOP9"/>
    <property type="match status" value="1"/>
</dbReference>
<dbReference type="SMART" id="SM00025">
    <property type="entry name" value="Pumilio"/>
    <property type="match status" value="8"/>
</dbReference>
<dbReference type="SUPFAM" id="SSF48371">
    <property type="entry name" value="ARM repeat"/>
    <property type="match status" value="1"/>
</dbReference>
<protein>
    <recommendedName>
        <fullName>Nucleolar protein 9</fullName>
    </recommendedName>
    <alternativeName>
        <fullName>Pumilio domain-containing protein NOP9</fullName>
    </alternativeName>
</protein>
<proteinExistence type="inferred from homology"/>
<comment type="function">
    <text evidence="1">RNA-binding nucleolar protein required for pre-rRNA processing. Involved in production of 18S rRNA and assembly of small ribosomal subunit (By similarity).</text>
</comment>
<comment type="subcellular location">
    <subcellularLocation>
        <location evidence="1">Nucleus</location>
        <location evidence="1">Nucleolus</location>
    </subcellularLocation>
</comment>
<comment type="similarity">
    <text evidence="3">Belongs to the NOP9 family.</text>
</comment>
<gene>
    <name type="primary">NOP9</name>
    <name type="ordered locus">KLLA0E13685g</name>
</gene>
<name>NOP9_KLULA</name>
<reference key="1">
    <citation type="journal article" date="2004" name="Nature">
        <title>Genome evolution in yeasts.</title>
        <authorList>
            <person name="Dujon B."/>
            <person name="Sherman D."/>
            <person name="Fischer G."/>
            <person name="Durrens P."/>
            <person name="Casaregola S."/>
            <person name="Lafontaine I."/>
            <person name="de Montigny J."/>
            <person name="Marck C."/>
            <person name="Neuveglise C."/>
            <person name="Talla E."/>
            <person name="Goffard N."/>
            <person name="Frangeul L."/>
            <person name="Aigle M."/>
            <person name="Anthouard V."/>
            <person name="Babour A."/>
            <person name="Barbe V."/>
            <person name="Barnay S."/>
            <person name="Blanchin S."/>
            <person name="Beckerich J.-M."/>
            <person name="Beyne E."/>
            <person name="Bleykasten C."/>
            <person name="Boisrame A."/>
            <person name="Boyer J."/>
            <person name="Cattolico L."/>
            <person name="Confanioleri F."/>
            <person name="de Daruvar A."/>
            <person name="Despons L."/>
            <person name="Fabre E."/>
            <person name="Fairhead C."/>
            <person name="Ferry-Dumazet H."/>
            <person name="Groppi A."/>
            <person name="Hantraye F."/>
            <person name="Hennequin C."/>
            <person name="Jauniaux N."/>
            <person name="Joyet P."/>
            <person name="Kachouri R."/>
            <person name="Kerrest A."/>
            <person name="Koszul R."/>
            <person name="Lemaire M."/>
            <person name="Lesur I."/>
            <person name="Ma L."/>
            <person name="Muller H."/>
            <person name="Nicaud J.-M."/>
            <person name="Nikolski M."/>
            <person name="Oztas S."/>
            <person name="Ozier-Kalogeropoulos O."/>
            <person name="Pellenz S."/>
            <person name="Potier S."/>
            <person name="Richard G.-F."/>
            <person name="Straub M.-L."/>
            <person name="Suleau A."/>
            <person name="Swennen D."/>
            <person name="Tekaia F."/>
            <person name="Wesolowski-Louvel M."/>
            <person name="Westhof E."/>
            <person name="Wirth B."/>
            <person name="Zeniou-Meyer M."/>
            <person name="Zivanovic Y."/>
            <person name="Bolotin-Fukuhara M."/>
            <person name="Thierry A."/>
            <person name="Bouchier C."/>
            <person name="Caudron B."/>
            <person name="Scarpelli C."/>
            <person name="Gaillardin C."/>
            <person name="Weissenbach J."/>
            <person name="Wincker P."/>
            <person name="Souciet J.-L."/>
        </authorList>
    </citation>
    <scope>NUCLEOTIDE SEQUENCE [LARGE SCALE GENOMIC DNA]</scope>
    <source>
        <strain>ATCC 8585 / CBS 2359 / DSM 70799 / NBRC 1267 / NRRL Y-1140 / WM37</strain>
    </source>
</reference>